<name>NHAA2_MYCSS</name>
<comment type="function">
    <text evidence="1">Na(+)/H(+) antiporter that extrudes sodium in exchange for external protons.</text>
</comment>
<comment type="catalytic activity">
    <reaction evidence="1">
        <text>Na(+)(in) + 2 H(+)(out) = Na(+)(out) + 2 H(+)(in)</text>
        <dbReference type="Rhea" id="RHEA:29251"/>
        <dbReference type="ChEBI" id="CHEBI:15378"/>
        <dbReference type="ChEBI" id="CHEBI:29101"/>
    </reaction>
    <physiologicalReaction direction="left-to-right" evidence="1">
        <dbReference type="Rhea" id="RHEA:29252"/>
    </physiologicalReaction>
</comment>
<comment type="subcellular location">
    <subcellularLocation>
        <location evidence="1">Cell membrane</location>
        <topology evidence="1">Multi-pass membrane protein</topology>
    </subcellularLocation>
</comment>
<comment type="similarity">
    <text evidence="1">Belongs to the NhaA Na(+)/H(+) (TC 2.A.33) antiporter family.</text>
</comment>
<reference key="1">
    <citation type="submission" date="2006-06" db="EMBL/GenBank/DDBJ databases">
        <title>Complete sequence of chromosome of Mycobacterium sp. MCS.</title>
        <authorList>
            <consortium name="US DOE Joint Genome Institute"/>
            <person name="Copeland A."/>
            <person name="Lucas S."/>
            <person name="Lapidus A."/>
            <person name="Barry K."/>
            <person name="Detter J.C."/>
            <person name="Glavina del Rio T."/>
            <person name="Hammon N."/>
            <person name="Israni S."/>
            <person name="Dalin E."/>
            <person name="Tice H."/>
            <person name="Pitluck S."/>
            <person name="Martinez M."/>
            <person name="Schmutz J."/>
            <person name="Larimer F."/>
            <person name="Land M."/>
            <person name="Hauser L."/>
            <person name="Kyrpides N."/>
            <person name="Kim E."/>
            <person name="Miller C.D."/>
            <person name="Hughes J.E."/>
            <person name="Anderson A.J."/>
            <person name="Sims R.C."/>
            <person name="Richardson P."/>
        </authorList>
    </citation>
    <scope>NUCLEOTIDE SEQUENCE [LARGE SCALE GENOMIC DNA]</scope>
    <source>
        <strain>MCS</strain>
    </source>
</reference>
<organism>
    <name type="scientific">Mycobacterium sp. (strain MCS)</name>
    <dbReference type="NCBI Taxonomy" id="164756"/>
    <lineage>
        <taxon>Bacteria</taxon>
        <taxon>Bacillati</taxon>
        <taxon>Actinomycetota</taxon>
        <taxon>Actinomycetes</taxon>
        <taxon>Mycobacteriales</taxon>
        <taxon>Mycobacteriaceae</taxon>
        <taxon>Mycobacterium</taxon>
    </lineage>
</organism>
<accession>Q1B9W9</accession>
<dbReference type="EMBL" id="CP000384">
    <property type="protein sequence ID" value="ABG08315.1"/>
    <property type="molecule type" value="Genomic_DNA"/>
</dbReference>
<dbReference type="SMR" id="Q1B9W9"/>
<dbReference type="KEGG" id="mmc:Mmcs_2207"/>
<dbReference type="HOGENOM" id="CLU_015803_0_0_11"/>
<dbReference type="GO" id="GO:0005886">
    <property type="term" value="C:plasma membrane"/>
    <property type="evidence" value="ECO:0007669"/>
    <property type="project" value="UniProtKB-SubCell"/>
</dbReference>
<dbReference type="GO" id="GO:0015385">
    <property type="term" value="F:sodium:proton antiporter activity"/>
    <property type="evidence" value="ECO:0007669"/>
    <property type="project" value="TreeGrafter"/>
</dbReference>
<dbReference type="GO" id="GO:0006885">
    <property type="term" value="P:regulation of pH"/>
    <property type="evidence" value="ECO:0007669"/>
    <property type="project" value="InterPro"/>
</dbReference>
<dbReference type="Gene3D" id="1.20.1530.10">
    <property type="entry name" value="Na+/H+ antiporter like domain"/>
    <property type="match status" value="1"/>
</dbReference>
<dbReference type="HAMAP" id="MF_01844">
    <property type="entry name" value="NhaA"/>
    <property type="match status" value="1"/>
</dbReference>
<dbReference type="InterPro" id="IPR023171">
    <property type="entry name" value="Na/H_antiporter_dom_sf"/>
</dbReference>
<dbReference type="InterPro" id="IPR004670">
    <property type="entry name" value="NhaA"/>
</dbReference>
<dbReference type="NCBIfam" id="TIGR00773">
    <property type="entry name" value="NhaA"/>
    <property type="match status" value="1"/>
</dbReference>
<dbReference type="PANTHER" id="PTHR30341:SF0">
    <property type="entry name" value="NA(+)_H(+) ANTIPORTER NHAA"/>
    <property type="match status" value="1"/>
</dbReference>
<dbReference type="PANTHER" id="PTHR30341">
    <property type="entry name" value="SODIUM ION/PROTON ANTIPORTER NHAA-RELATED"/>
    <property type="match status" value="1"/>
</dbReference>
<dbReference type="Pfam" id="PF06965">
    <property type="entry name" value="Na_H_antiport_1"/>
    <property type="match status" value="1"/>
</dbReference>
<feature type="chain" id="PRO_0000334341" description="Na(+)/H(+) antiporter NhaA 2">
    <location>
        <begin position="1"/>
        <end position="441"/>
    </location>
</feature>
<feature type="transmembrane region" description="Helical" evidence="1">
    <location>
        <begin position="34"/>
        <end position="54"/>
    </location>
</feature>
<feature type="transmembrane region" description="Helical" evidence="1">
    <location>
        <begin position="77"/>
        <end position="97"/>
    </location>
</feature>
<feature type="transmembrane region" description="Helical" evidence="1">
    <location>
        <begin position="115"/>
        <end position="135"/>
    </location>
</feature>
<feature type="transmembrane region" description="Helical" evidence="1">
    <location>
        <begin position="146"/>
        <end position="166"/>
    </location>
</feature>
<feature type="transmembrane region" description="Helical" evidence="1">
    <location>
        <begin position="176"/>
        <end position="196"/>
    </location>
</feature>
<feature type="transmembrane region" description="Helical" evidence="1">
    <location>
        <begin position="199"/>
        <end position="219"/>
    </location>
</feature>
<feature type="transmembrane region" description="Helical" evidence="1">
    <location>
        <begin position="225"/>
        <end position="245"/>
    </location>
</feature>
<feature type="transmembrane region" description="Helical" evidence="1">
    <location>
        <begin position="249"/>
        <end position="269"/>
    </location>
</feature>
<feature type="transmembrane region" description="Helical" evidence="1">
    <location>
        <begin position="290"/>
        <end position="310"/>
    </location>
</feature>
<feature type="transmembrane region" description="Helical" evidence="1">
    <location>
        <begin position="317"/>
        <end position="337"/>
    </location>
</feature>
<feature type="transmembrane region" description="Helical" evidence="1">
    <location>
        <begin position="355"/>
        <end position="375"/>
    </location>
</feature>
<feature type="transmembrane region" description="Helical" evidence="1">
    <location>
        <begin position="389"/>
        <end position="409"/>
    </location>
</feature>
<proteinExistence type="inferred from homology"/>
<evidence type="ECO:0000255" key="1">
    <source>
        <dbReference type="HAMAP-Rule" id="MF_01844"/>
    </source>
</evidence>
<keyword id="KW-0050">Antiport</keyword>
<keyword id="KW-1003">Cell membrane</keyword>
<keyword id="KW-0406">Ion transport</keyword>
<keyword id="KW-0472">Membrane</keyword>
<keyword id="KW-0915">Sodium</keyword>
<keyword id="KW-0739">Sodium transport</keyword>
<keyword id="KW-0812">Transmembrane</keyword>
<keyword id="KW-1133">Transmembrane helix</keyword>
<keyword id="KW-0813">Transport</keyword>
<gene>
    <name evidence="1" type="primary">nhaA2</name>
    <name type="ordered locus">Mmcs_2207</name>
</gene>
<sequence length="441" mass="46315">MTNTPAPRARRSVLSRGSWSETARIAGILRKETVGGAVLLVASAVALVWANSPWAESYFALRDLKIGAEPFGLHLNLTLGTWAADGLLAVFFLVVGLELKREFVAGDLRDPARAALPMAAAVGGMVVPALIFVAVTAPVGDGATRGWAIPTATDIAFAVAVLAVISTHLPAALRTFLLTLAVVDDLLAVTVIAVFYTDEINLTALGLSIVPLALFALCVQRRIRSWWLLLPLGVATWVLMHESGVHATVAGVLLGFTVPVLRSVAAGGPEAGPGLAEHFEHRLRPLSAGVAVPVFAFFAAGVAIGGVSGLTRALSDPITLGIILGLVVGKPVGIFLTTRVLTAVTRANLDDALRWIDVFGVALLAGIGFTVSLLIGDLAYGLGSDRDDFVKVGVLTGSLVAALIAAVLLRVRNRHYRAVWLQETADTDRDGVPDVYQSQRD</sequence>
<protein>
    <recommendedName>
        <fullName evidence="1">Na(+)/H(+) antiporter NhaA 2</fullName>
    </recommendedName>
    <alternativeName>
        <fullName evidence="1">Sodium/proton antiporter NhaA 2</fullName>
    </alternativeName>
</protein>